<accession>B7VKH0</accession>
<proteinExistence type="inferred from homology"/>
<organism>
    <name type="scientific">Vibrio atlanticus (strain LGP32)</name>
    <name type="common">Vibrio splendidus (strain Mel32)</name>
    <dbReference type="NCBI Taxonomy" id="575788"/>
    <lineage>
        <taxon>Bacteria</taxon>
        <taxon>Pseudomonadati</taxon>
        <taxon>Pseudomonadota</taxon>
        <taxon>Gammaproteobacteria</taxon>
        <taxon>Vibrionales</taxon>
        <taxon>Vibrionaceae</taxon>
        <taxon>Vibrio</taxon>
    </lineage>
</organism>
<name>ISPE_VIBA3</name>
<evidence type="ECO:0000255" key="1">
    <source>
        <dbReference type="HAMAP-Rule" id="MF_00061"/>
    </source>
</evidence>
<sequence>MDTEKMITTPTHWPSPAKLNLFLYITGRRDNGYHELQTLFQFVDFGDELTVTANRETSSITITPEIPGVATEDNLIWKAATALQQHTSTTFGADIQLKKVLPMGGGIGGGSSNAATVLVALNHLWQLNLSDDQLAEIGLKLGADVPVFVRGHAAFAEGVGEQLQPANPDEKWYLVVKPQVSIATVDIFTHSELTRNTPKRALSTLLEQEYVNDCEKIVRMLYPEVDKQLSWLLQYAPSRLTGTGSCVFAEFSSKKEAELVLEQLPDTVSAFVAKGRNISPLKETLAEYQSAHPQSI</sequence>
<feature type="chain" id="PRO_1000202391" description="4-diphosphocytidyl-2-C-methyl-D-erythritol kinase">
    <location>
        <begin position="1"/>
        <end position="296"/>
    </location>
</feature>
<feature type="active site" evidence="1">
    <location>
        <position position="18"/>
    </location>
</feature>
<feature type="active site" evidence="1">
    <location>
        <position position="144"/>
    </location>
</feature>
<feature type="binding site" evidence="1">
    <location>
        <begin position="102"/>
        <end position="112"/>
    </location>
    <ligand>
        <name>ATP</name>
        <dbReference type="ChEBI" id="CHEBI:30616"/>
    </ligand>
</feature>
<comment type="function">
    <text evidence="1">Catalyzes the phosphorylation of the position 2 hydroxy group of 4-diphosphocytidyl-2C-methyl-D-erythritol.</text>
</comment>
<comment type="catalytic activity">
    <reaction evidence="1">
        <text>4-CDP-2-C-methyl-D-erythritol + ATP = 4-CDP-2-C-methyl-D-erythritol 2-phosphate + ADP + H(+)</text>
        <dbReference type="Rhea" id="RHEA:18437"/>
        <dbReference type="ChEBI" id="CHEBI:15378"/>
        <dbReference type="ChEBI" id="CHEBI:30616"/>
        <dbReference type="ChEBI" id="CHEBI:57823"/>
        <dbReference type="ChEBI" id="CHEBI:57919"/>
        <dbReference type="ChEBI" id="CHEBI:456216"/>
        <dbReference type="EC" id="2.7.1.148"/>
    </reaction>
</comment>
<comment type="pathway">
    <text evidence="1">Isoprenoid biosynthesis; isopentenyl diphosphate biosynthesis via DXP pathway; isopentenyl diphosphate from 1-deoxy-D-xylulose 5-phosphate: step 3/6.</text>
</comment>
<comment type="similarity">
    <text evidence="1">Belongs to the GHMP kinase family. IspE subfamily.</text>
</comment>
<protein>
    <recommendedName>
        <fullName evidence="1">4-diphosphocytidyl-2-C-methyl-D-erythritol kinase</fullName>
        <shortName evidence="1">CMK</shortName>
        <ecNumber evidence="1">2.7.1.148</ecNumber>
    </recommendedName>
    <alternativeName>
        <fullName evidence="1">4-(cytidine-5'-diphospho)-2-C-methyl-D-erythritol kinase</fullName>
    </alternativeName>
</protein>
<keyword id="KW-0067">ATP-binding</keyword>
<keyword id="KW-0414">Isoprene biosynthesis</keyword>
<keyword id="KW-0418">Kinase</keyword>
<keyword id="KW-0547">Nucleotide-binding</keyword>
<keyword id="KW-0808">Transferase</keyword>
<reference key="1">
    <citation type="submission" date="2009-02" db="EMBL/GenBank/DDBJ databases">
        <title>Vibrio splendidus str. LGP32 complete genome.</title>
        <authorList>
            <person name="Mazel D."/>
            <person name="Le Roux F."/>
        </authorList>
    </citation>
    <scope>NUCLEOTIDE SEQUENCE [LARGE SCALE GENOMIC DNA]</scope>
    <source>
        <strain>LGP32</strain>
    </source>
</reference>
<gene>
    <name evidence="1" type="primary">ispE</name>
    <name type="ordered locus">VS_0749</name>
</gene>
<dbReference type="EC" id="2.7.1.148" evidence="1"/>
<dbReference type="EMBL" id="FM954972">
    <property type="protein sequence ID" value="CAV17726.1"/>
    <property type="molecule type" value="Genomic_DNA"/>
</dbReference>
<dbReference type="SMR" id="B7VKH0"/>
<dbReference type="STRING" id="575788.VS_0749"/>
<dbReference type="KEGG" id="vsp:VS_0749"/>
<dbReference type="eggNOG" id="COG1947">
    <property type="taxonomic scope" value="Bacteria"/>
</dbReference>
<dbReference type="HOGENOM" id="CLU_053057_3_0_6"/>
<dbReference type="UniPathway" id="UPA00056">
    <property type="reaction ID" value="UER00094"/>
</dbReference>
<dbReference type="Proteomes" id="UP000009100">
    <property type="component" value="Chromosome 1"/>
</dbReference>
<dbReference type="GO" id="GO:0050515">
    <property type="term" value="F:4-(cytidine 5'-diphospho)-2-C-methyl-D-erythritol kinase activity"/>
    <property type="evidence" value="ECO:0007669"/>
    <property type="project" value="UniProtKB-UniRule"/>
</dbReference>
<dbReference type="GO" id="GO:0005524">
    <property type="term" value="F:ATP binding"/>
    <property type="evidence" value="ECO:0007669"/>
    <property type="project" value="UniProtKB-UniRule"/>
</dbReference>
<dbReference type="GO" id="GO:0019288">
    <property type="term" value="P:isopentenyl diphosphate biosynthetic process, methylerythritol 4-phosphate pathway"/>
    <property type="evidence" value="ECO:0007669"/>
    <property type="project" value="UniProtKB-UniRule"/>
</dbReference>
<dbReference type="GO" id="GO:0016114">
    <property type="term" value="P:terpenoid biosynthetic process"/>
    <property type="evidence" value="ECO:0007669"/>
    <property type="project" value="InterPro"/>
</dbReference>
<dbReference type="FunFam" id="3.30.230.10:FF:000022">
    <property type="entry name" value="4-diphosphocytidyl-2-C-methyl-D-erythritol kinase"/>
    <property type="match status" value="1"/>
</dbReference>
<dbReference type="FunFam" id="3.30.70.890:FF:000004">
    <property type="entry name" value="4-diphosphocytidyl-2-C-methyl-D-erythritol kinase"/>
    <property type="match status" value="1"/>
</dbReference>
<dbReference type="Gene3D" id="3.30.230.10">
    <property type="match status" value="1"/>
</dbReference>
<dbReference type="Gene3D" id="3.30.70.890">
    <property type="entry name" value="GHMP kinase, C-terminal domain"/>
    <property type="match status" value="1"/>
</dbReference>
<dbReference type="HAMAP" id="MF_00061">
    <property type="entry name" value="IspE"/>
    <property type="match status" value="1"/>
</dbReference>
<dbReference type="InterPro" id="IPR013750">
    <property type="entry name" value="GHMP_kinase_C_dom"/>
</dbReference>
<dbReference type="InterPro" id="IPR036554">
    <property type="entry name" value="GHMP_kinase_C_sf"/>
</dbReference>
<dbReference type="InterPro" id="IPR006204">
    <property type="entry name" value="GHMP_kinase_N_dom"/>
</dbReference>
<dbReference type="InterPro" id="IPR004424">
    <property type="entry name" value="IspE"/>
</dbReference>
<dbReference type="InterPro" id="IPR020568">
    <property type="entry name" value="Ribosomal_Su5_D2-typ_SF"/>
</dbReference>
<dbReference type="InterPro" id="IPR014721">
    <property type="entry name" value="Ribsml_uS5_D2-typ_fold_subgr"/>
</dbReference>
<dbReference type="NCBIfam" id="TIGR00154">
    <property type="entry name" value="ispE"/>
    <property type="match status" value="1"/>
</dbReference>
<dbReference type="PANTHER" id="PTHR43527">
    <property type="entry name" value="4-DIPHOSPHOCYTIDYL-2-C-METHYL-D-ERYTHRITOL KINASE, CHLOROPLASTIC"/>
    <property type="match status" value="1"/>
</dbReference>
<dbReference type="PANTHER" id="PTHR43527:SF2">
    <property type="entry name" value="4-DIPHOSPHOCYTIDYL-2-C-METHYL-D-ERYTHRITOL KINASE, CHLOROPLASTIC"/>
    <property type="match status" value="1"/>
</dbReference>
<dbReference type="Pfam" id="PF08544">
    <property type="entry name" value="GHMP_kinases_C"/>
    <property type="match status" value="1"/>
</dbReference>
<dbReference type="Pfam" id="PF00288">
    <property type="entry name" value="GHMP_kinases_N"/>
    <property type="match status" value="1"/>
</dbReference>
<dbReference type="PIRSF" id="PIRSF010376">
    <property type="entry name" value="IspE"/>
    <property type="match status" value="1"/>
</dbReference>
<dbReference type="SUPFAM" id="SSF55060">
    <property type="entry name" value="GHMP Kinase, C-terminal domain"/>
    <property type="match status" value="1"/>
</dbReference>
<dbReference type="SUPFAM" id="SSF54211">
    <property type="entry name" value="Ribosomal protein S5 domain 2-like"/>
    <property type="match status" value="1"/>
</dbReference>